<accession>Q9ZC84</accession>
<name>HEMH_RICPR</name>
<gene>
    <name evidence="1" type="primary">hemH</name>
    <name type="ordered locus">RP884</name>
</gene>
<evidence type="ECO:0000255" key="1">
    <source>
        <dbReference type="HAMAP-Rule" id="MF_00323"/>
    </source>
</evidence>
<evidence type="ECO:0000305" key="2"/>
<dbReference type="EC" id="4.98.1.1" evidence="1"/>
<dbReference type="EMBL" id="AJ235273">
    <property type="protein sequence ID" value="CAA15306.1"/>
    <property type="status" value="ALT_INIT"/>
    <property type="molecule type" value="Genomic_DNA"/>
</dbReference>
<dbReference type="PIR" id="B71651">
    <property type="entry name" value="B71651"/>
</dbReference>
<dbReference type="RefSeq" id="NP_221230.1">
    <property type="nucleotide sequence ID" value="NC_000963.1"/>
</dbReference>
<dbReference type="SMR" id="Q9ZC84"/>
<dbReference type="STRING" id="272947.gene:17555953"/>
<dbReference type="EnsemblBacteria" id="CAA15306">
    <property type="protein sequence ID" value="CAA15306"/>
    <property type="gene ID" value="CAA15306"/>
</dbReference>
<dbReference type="KEGG" id="rpr:RP884"/>
<dbReference type="PATRIC" id="fig|272947.5.peg.924"/>
<dbReference type="eggNOG" id="COG0276">
    <property type="taxonomic scope" value="Bacteria"/>
</dbReference>
<dbReference type="HOGENOM" id="CLU_018884_4_1_5"/>
<dbReference type="OrthoDB" id="9809741at2"/>
<dbReference type="UniPathway" id="UPA00252">
    <property type="reaction ID" value="UER00325"/>
</dbReference>
<dbReference type="Proteomes" id="UP000002480">
    <property type="component" value="Chromosome"/>
</dbReference>
<dbReference type="GO" id="GO:0005737">
    <property type="term" value="C:cytoplasm"/>
    <property type="evidence" value="ECO:0007669"/>
    <property type="project" value="UniProtKB-SubCell"/>
</dbReference>
<dbReference type="GO" id="GO:0004325">
    <property type="term" value="F:ferrochelatase activity"/>
    <property type="evidence" value="ECO:0007669"/>
    <property type="project" value="UniProtKB-UniRule"/>
</dbReference>
<dbReference type="GO" id="GO:0046872">
    <property type="term" value="F:metal ion binding"/>
    <property type="evidence" value="ECO:0007669"/>
    <property type="project" value="UniProtKB-KW"/>
</dbReference>
<dbReference type="GO" id="GO:0006783">
    <property type="term" value="P:heme biosynthetic process"/>
    <property type="evidence" value="ECO:0007669"/>
    <property type="project" value="UniProtKB-UniRule"/>
</dbReference>
<dbReference type="CDD" id="cd00419">
    <property type="entry name" value="Ferrochelatase_C"/>
    <property type="match status" value="1"/>
</dbReference>
<dbReference type="CDD" id="cd03411">
    <property type="entry name" value="Ferrochelatase_N"/>
    <property type="match status" value="1"/>
</dbReference>
<dbReference type="Gene3D" id="3.40.50.1400">
    <property type="match status" value="2"/>
</dbReference>
<dbReference type="HAMAP" id="MF_00323">
    <property type="entry name" value="Ferrochelatase"/>
    <property type="match status" value="1"/>
</dbReference>
<dbReference type="InterPro" id="IPR001015">
    <property type="entry name" value="Ferrochelatase"/>
</dbReference>
<dbReference type="InterPro" id="IPR019772">
    <property type="entry name" value="Ferrochelatase_AS"/>
</dbReference>
<dbReference type="InterPro" id="IPR033644">
    <property type="entry name" value="Ferrochelatase_C"/>
</dbReference>
<dbReference type="InterPro" id="IPR033659">
    <property type="entry name" value="Ferrochelatase_N"/>
</dbReference>
<dbReference type="NCBIfam" id="TIGR00109">
    <property type="entry name" value="hemH"/>
    <property type="match status" value="1"/>
</dbReference>
<dbReference type="PANTHER" id="PTHR11108">
    <property type="entry name" value="FERROCHELATASE"/>
    <property type="match status" value="1"/>
</dbReference>
<dbReference type="PANTHER" id="PTHR11108:SF1">
    <property type="entry name" value="FERROCHELATASE, MITOCHONDRIAL"/>
    <property type="match status" value="1"/>
</dbReference>
<dbReference type="Pfam" id="PF00762">
    <property type="entry name" value="Ferrochelatase"/>
    <property type="match status" value="1"/>
</dbReference>
<dbReference type="SUPFAM" id="SSF53800">
    <property type="entry name" value="Chelatase"/>
    <property type="match status" value="1"/>
</dbReference>
<dbReference type="PROSITE" id="PS00534">
    <property type="entry name" value="FERROCHELATASE"/>
    <property type="match status" value="1"/>
</dbReference>
<keyword id="KW-0963">Cytoplasm</keyword>
<keyword id="KW-0350">Heme biosynthesis</keyword>
<keyword id="KW-0408">Iron</keyword>
<keyword id="KW-0456">Lyase</keyword>
<keyword id="KW-0479">Metal-binding</keyword>
<keyword id="KW-0627">Porphyrin biosynthesis</keyword>
<keyword id="KW-1185">Reference proteome</keyword>
<protein>
    <recommendedName>
        <fullName evidence="1">Ferrochelatase</fullName>
        <ecNumber evidence="1">4.98.1.1</ecNumber>
    </recommendedName>
    <alternativeName>
        <fullName evidence="1">Heme synthase</fullName>
    </alternativeName>
    <alternativeName>
        <fullName evidence="1">Protoheme ferro-lyase</fullName>
    </alternativeName>
</protein>
<sequence length="342" mass="39611">MNKRIAIVLFNLGGPEDIEYVKPFLFNLFYDKAIINLPNPLRYIIAKIISITREKKSQKIYSLIGSKSYLIQETEKQKLAITEKLKEFIKEDFIIFINMRYSTPFAKEVIGQIKEYNPSEIILLPLYPQFSSTTTGSSVKNFLQNIDIDIPIKTICCYPIEEDFIKAHVSIIKEKLYDKNFRILFSAHGLPKRIIKAGDPYSFQIKETVNKIVKELNIKDLDYKITYQSRVGPIEWLKPNTEDEIELAGKLKKDIIIVPISFVSEHVETLVELDIEYKLIADKYKIQYTRIPTLGTNKIFINSLTNILLRFINNTNTNLVMSSSSKRICPNKFTKCLCNLTN</sequence>
<organism>
    <name type="scientific">Rickettsia prowazekii (strain Madrid E)</name>
    <dbReference type="NCBI Taxonomy" id="272947"/>
    <lineage>
        <taxon>Bacteria</taxon>
        <taxon>Pseudomonadati</taxon>
        <taxon>Pseudomonadota</taxon>
        <taxon>Alphaproteobacteria</taxon>
        <taxon>Rickettsiales</taxon>
        <taxon>Rickettsiaceae</taxon>
        <taxon>Rickettsieae</taxon>
        <taxon>Rickettsia</taxon>
        <taxon>typhus group</taxon>
    </lineage>
</organism>
<proteinExistence type="inferred from homology"/>
<reference key="1">
    <citation type="journal article" date="1998" name="Nature">
        <title>The genome sequence of Rickettsia prowazekii and the origin of mitochondria.</title>
        <authorList>
            <person name="Andersson S.G.E."/>
            <person name="Zomorodipour A."/>
            <person name="Andersson J.O."/>
            <person name="Sicheritz-Ponten T."/>
            <person name="Alsmark U.C.M."/>
            <person name="Podowski R.M."/>
            <person name="Naeslund A.K."/>
            <person name="Eriksson A.-S."/>
            <person name="Winkler H.H."/>
            <person name="Kurland C.G."/>
        </authorList>
    </citation>
    <scope>NUCLEOTIDE SEQUENCE [LARGE SCALE GENOMIC DNA]</scope>
    <source>
        <strain>Madrid E</strain>
    </source>
</reference>
<comment type="function">
    <text evidence="1">Catalyzes the ferrous insertion into protoporphyrin IX.</text>
</comment>
<comment type="catalytic activity">
    <reaction evidence="1">
        <text>heme b + 2 H(+) = protoporphyrin IX + Fe(2+)</text>
        <dbReference type="Rhea" id="RHEA:22584"/>
        <dbReference type="ChEBI" id="CHEBI:15378"/>
        <dbReference type="ChEBI" id="CHEBI:29033"/>
        <dbReference type="ChEBI" id="CHEBI:57306"/>
        <dbReference type="ChEBI" id="CHEBI:60344"/>
        <dbReference type="EC" id="4.98.1.1"/>
    </reaction>
</comment>
<comment type="pathway">
    <text evidence="1">Porphyrin-containing compound metabolism; protoheme biosynthesis; protoheme from protoporphyrin-IX: step 1/1.</text>
</comment>
<comment type="subcellular location">
    <subcellularLocation>
        <location evidence="1">Cytoplasm</location>
    </subcellularLocation>
</comment>
<comment type="similarity">
    <text evidence="1 2">Belongs to the ferrochelatase family.</text>
</comment>
<comment type="sequence caution" evidence="2">
    <conflict type="erroneous initiation">
        <sequence resource="EMBL-CDS" id="CAA15306"/>
    </conflict>
</comment>
<feature type="chain" id="PRO_0000175194" description="Ferrochelatase">
    <location>
        <begin position="1"/>
        <end position="342"/>
    </location>
</feature>
<feature type="binding site" evidence="1">
    <location>
        <position position="188"/>
    </location>
    <ligand>
        <name>Fe cation</name>
        <dbReference type="ChEBI" id="CHEBI:24875"/>
    </ligand>
</feature>
<feature type="binding site" evidence="1">
    <location>
        <position position="268"/>
    </location>
    <ligand>
        <name>Fe cation</name>
        <dbReference type="ChEBI" id="CHEBI:24875"/>
    </ligand>
</feature>